<protein>
    <recommendedName>
        <fullName evidence="1">Large ribosomal subunit protein uL11</fullName>
    </recommendedName>
    <alternativeName>
        <fullName evidence="2">50S ribosomal protein L11</fullName>
    </alternativeName>
</protein>
<gene>
    <name evidence="1" type="primary">rplK</name>
    <name type="ordered locus">HS_0169</name>
</gene>
<keyword id="KW-0488">Methylation</keyword>
<keyword id="KW-0687">Ribonucleoprotein</keyword>
<keyword id="KW-0689">Ribosomal protein</keyword>
<keyword id="KW-0694">RNA-binding</keyword>
<keyword id="KW-0699">rRNA-binding</keyword>
<accession>Q0I0V2</accession>
<comment type="function">
    <text evidence="1">Forms part of the ribosomal stalk which helps the ribosome interact with GTP-bound translation factors.</text>
</comment>
<comment type="subunit">
    <text evidence="1">Part of the ribosomal stalk of the 50S ribosomal subunit. Interacts with L10 and the large rRNA to form the base of the stalk. L10 forms an elongated spine to which L12 dimers bind in a sequential fashion forming a multimeric L10(L12)X complex.</text>
</comment>
<comment type="PTM">
    <text evidence="1">One or more lysine residues are methylated.</text>
</comment>
<comment type="similarity">
    <text evidence="1">Belongs to the universal ribosomal protein uL11 family.</text>
</comment>
<name>RL11_HISS1</name>
<feature type="chain" id="PRO_1000046188" description="Large ribosomal subunit protein uL11">
    <location>
        <begin position="1"/>
        <end position="142"/>
    </location>
</feature>
<evidence type="ECO:0000255" key="1">
    <source>
        <dbReference type="HAMAP-Rule" id="MF_00736"/>
    </source>
</evidence>
<evidence type="ECO:0000305" key="2"/>
<dbReference type="EMBL" id="CP000436">
    <property type="protein sequence ID" value="ABI24447.1"/>
    <property type="molecule type" value="Genomic_DNA"/>
</dbReference>
<dbReference type="SMR" id="Q0I0V2"/>
<dbReference type="KEGG" id="hso:HS_0169"/>
<dbReference type="eggNOG" id="COG0080">
    <property type="taxonomic scope" value="Bacteria"/>
</dbReference>
<dbReference type="HOGENOM" id="CLU_074237_2_0_6"/>
<dbReference type="GO" id="GO:0022625">
    <property type="term" value="C:cytosolic large ribosomal subunit"/>
    <property type="evidence" value="ECO:0007669"/>
    <property type="project" value="TreeGrafter"/>
</dbReference>
<dbReference type="GO" id="GO:0070180">
    <property type="term" value="F:large ribosomal subunit rRNA binding"/>
    <property type="evidence" value="ECO:0007669"/>
    <property type="project" value="UniProtKB-UniRule"/>
</dbReference>
<dbReference type="GO" id="GO:0003735">
    <property type="term" value="F:structural constituent of ribosome"/>
    <property type="evidence" value="ECO:0007669"/>
    <property type="project" value="InterPro"/>
</dbReference>
<dbReference type="GO" id="GO:0006412">
    <property type="term" value="P:translation"/>
    <property type="evidence" value="ECO:0007669"/>
    <property type="project" value="UniProtKB-UniRule"/>
</dbReference>
<dbReference type="CDD" id="cd00349">
    <property type="entry name" value="Ribosomal_L11"/>
    <property type="match status" value="1"/>
</dbReference>
<dbReference type="FunFam" id="1.10.10.250:FF:000001">
    <property type="entry name" value="50S ribosomal protein L11"/>
    <property type="match status" value="1"/>
</dbReference>
<dbReference type="FunFam" id="3.30.1550.10:FF:000001">
    <property type="entry name" value="50S ribosomal protein L11"/>
    <property type="match status" value="1"/>
</dbReference>
<dbReference type="Gene3D" id="1.10.10.250">
    <property type="entry name" value="Ribosomal protein L11, C-terminal domain"/>
    <property type="match status" value="1"/>
</dbReference>
<dbReference type="Gene3D" id="3.30.1550.10">
    <property type="entry name" value="Ribosomal protein L11/L12, N-terminal domain"/>
    <property type="match status" value="1"/>
</dbReference>
<dbReference type="HAMAP" id="MF_00736">
    <property type="entry name" value="Ribosomal_uL11"/>
    <property type="match status" value="1"/>
</dbReference>
<dbReference type="InterPro" id="IPR000911">
    <property type="entry name" value="Ribosomal_uL11"/>
</dbReference>
<dbReference type="InterPro" id="IPR006519">
    <property type="entry name" value="Ribosomal_uL11_bac-typ"/>
</dbReference>
<dbReference type="InterPro" id="IPR020783">
    <property type="entry name" value="Ribosomal_uL11_C"/>
</dbReference>
<dbReference type="InterPro" id="IPR036769">
    <property type="entry name" value="Ribosomal_uL11_C_sf"/>
</dbReference>
<dbReference type="InterPro" id="IPR020785">
    <property type="entry name" value="Ribosomal_uL11_CS"/>
</dbReference>
<dbReference type="InterPro" id="IPR020784">
    <property type="entry name" value="Ribosomal_uL11_N"/>
</dbReference>
<dbReference type="InterPro" id="IPR036796">
    <property type="entry name" value="Ribosomal_uL11_N_sf"/>
</dbReference>
<dbReference type="NCBIfam" id="TIGR01632">
    <property type="entry name" value="L11_bact"/>
    <property type="match status" value="1"/>
</dbReference>
<dbReference type="PANTHER" id="PTHR11661">
    <property type="entry name" value="60S RIBOSOMAL PROTEIN L12"/>
    <property type="match status" value="1"/>
</dbReference>
<dbReference type="PANTHER" id="PTHR11661:SF1">
    <property type="entry name" value="LARGE RIBOSOMAL SUBUNIT PROTEIN UL11M"/>
    <property type="match status" value="1"/>
</dbReference>
<dbReference type="Pfam" id="PF00298">
    <property type="entry name" value="Ribosomal_L11"/>
    <property type="match status" value="1"/>
</dbReference>
<dbReference type="Pfam" id="PF03946">
    <property type="entry name" value="Ribosomal_L11_N"/>
    <property type="match status" value="1"/>
</dbReference>
<dbReference type="SMART" id="SM00649">
    <property type="entry name" value="RL11"/>
    <property type="match status" value="1"/>
</dbReference>
<dbReference type="SUPFAM" id="SSF54747">
    <property type="entry name" value="Ribosomal L11/L12e N-terminal domain"/>
    <property type="match status" value="1"/>
</dbReference>
<dbReference type="SUPFAM" id="SSF46906">
    <property type="entry name" value="Ribosomal protein L11, C-terminal domain"/>
    <property type="match status" value="1"/>
</dbReference>
<dbReference type="PROSITE" id="PS00359">
    <property type="entry name" value="RIBOSOMAL_L11"/>
    <property type="match status" value="1"/>
</dbReference>
<reference key="1">
    <citation type="journal article" date="2007" name="J. Bacteriol.">
        <title>Complete genome sequence of Haemophilus somnus (Histophilus somni) strain 129Pt and comparison to Haemophilus ducreyi 35000HP and Haemophilus influenzae Rd.</title>
        <authorList>
            <person name="Challacombe J.F."/>
            <person name="Duncan A.J."/>
            <person name="Brettin T.S."/>
            <person name="Bruce D."/>
            <person name="Chertkov O."/>
            <person name="Detter J.C."/>
            <person name="Han C.S."/>
            <person name="Misra M."/>
            <person name="Richardson P."/>
            <person name="Tapia R."/>
            <person name="Thayer N."/>
            <person name="Xie G."/>
            <person name="Inzana T.J."/>
        </authorList>
    </citation>
    <scope>NUCLEOTIDE SEQUENCE [LARGE SCALE GENOMIC DNA]</scope>
    <source>
        <strain>129Pt</strain>
    </source>
</reference>
<organism>
    <name type="scientific">Histophilus somni (strain 129Pt)</name>
    <name type="common">Haemophilus somnus</name>
    <dbReference type="NCBI Taxonomy" id="205914"/>
    <lineage>
        <taxon>Bacteria</taxon>
        <taxon>Pseudomonadati</taxon>
        <taxon>Pseudomonadota</taxon>
        <taxon>Gammaproteobacteria</taxon>
        <taxon>Pasteurellales</taxon>
        <taxon>Pasteurellaceae</taxon>
        <taxon>Histophilus</taxon>
    </lineage>
</organism>
<proteinExistence type="inferred from homology"/>
<sequence>MAKKVQAYVKLQVAAGMANPSPPVGPALGQQGVNIMEFCKAFNARTESLEKGLPIPVVITVYADRSFTFVTKTPPAAVLLKKAAGIKSGSSKPNKDKVGKVTLDQIRQIAETKAADMTGATIETKMKSIEGTARSMGLVVEG</sequence>